<keyword id="KW-0687">Ribonucleoprotein</keyword>
<keyword id="KW-0689">Ribosomal protein</keyword>
<keyword id="KW-0694">RNA-binding</keyword>
<keyword id="KW-0699">rRNA-binding</keyword>
<proteinExistence type="inferred from homology"/>
<dbReference type="EMBL" id="CP000246">
    <property type="protein sequence ID" value="ABG82468.1"/>
    <property type="molecule type" value="Genomic_DNA"/>
</dbReference>
<dbReference type="RefSeq" id="WP_003454424.1">
    <property type="nucleotide sequence ID" value="NC_008261.1"/>
</dbReference>
<dbReference type="SMR" id="Q0TMR2"/>
<dbReference type="STRING" id="195103.CPF_2698"/>
<dbReference type="PaxDb" id="195103-CPF_2698"/>
<dbReference type="GeneID" id="93001025"/>
<dbReference type="KEGG" id="cpf:CPF_2698"/>
<dbReference type="eggNOG" id="COG0256">
    <property type="taxonomic scope" value="Bacteria"/>
</dbReference>
<dbReference type="HOGENOM" id="CLU_098841_0_1_9"/>
<dbReference type="Proteomes" id="UP000001823">
    <property type="component" value="Chromosome"/>
</dbReference>
<dbReference type="GO" id="GO:0022625">
    <property type="term" value="C:cytosolic large ribosomal subunit"/>
    <property type="evidence" value="ECO:0007669"/>
    <property type="project" value="TreeGrafter"/>
</dbReference>
<dbReference type="GO" id="GO:0008097">
    <property type="term" value="F:5S rRNA binding"/>
    <property type="evidence" value="ECO:0007669"/>
    <property type="project" value="TreeGrafter"/>
</dbReference>
<dbReference type="GO" id="GO:0003735">
    <property type="term" value="F:structural constituent of ribosome"/>
    <property type="evidence" value="ECO:0007669"/>
    <property type="project" value="InterPro"/>
</dbReference>
<dbReference type="GO" id="GO:0006412">
    <property type="term" value="P:translation"/>
    <property type="evidence" value="ECO:0007669"/>
    <property type="project" value="UniProtKB-UniRule"/>
</dbReference>
<dbReference type="CDD" id="cd00432">
    <property type="entry name" value="Ribosomal_L18_L5e"/>
    <property type="match status" value="1"/>
</dbReference>
<dbReference type="FunFam" id="3.30.420.100:FF:000001">
    <property type="entry name" value="50S ribosomal protein L18"/>
    <property type="match status" value="1"/>
</dbReference>
<dbReference type="Gene3D" id="3.30.420.100">
    <property type="match status" value="1"/>
</dbReference>
<dbReference type="HAMAP" id="MF_01337_B">
    <property type="entry name" value="Ribosomal_uL18_B"/>
    <property type="match status" value="1"/>
</dbReference>
<dbReference type="InterPro" id="IPR004389">
    <property type="entry name" value="Ribosomal_uL18_bac-type"/>
</dbReference>
<dbReference type="InterPro" id="IPR005484">
    <property type="entry name" value="Ribosomal_uL18_bac/euk"/>
</dbReference>
<dbReference type="NCBIfam" id="TIGR00060">
    <property type="entry name" value="L18_bact"/>
    <property type="match status" value="1"/>
</dbReference>
<dbReference type="PANTHER" id="PTHR12899">
    <property type="entry name" value="39S RIBOSOMAL PROTEIN L18, MITOCHONDRIAL"/>
    <property type="match status" value="1"/>
</dbReference>
<dbReference type="PANTHER" id="PTHR12899:SF3">
    <property type="entry name" value="LARGE RIBOSOMAL SUBUNIT PROTEIN UL18M"/>
    <property type="match status" value="1"/>
</dbReference>
<dbReference type="Pfam" id="PF00861">
    <property type="entry name" value="Ribosomal_L18p"/>
    <property type="match status" value="1"/>
</dbReference>
<dbReference type="SUPFAM" id="SSF53137">
    <property type="entry name" value="Translational machinery components"/>
    <property type="match status" value="1"/>
</dbReference>
<reference key="1">
    <citation type="journal article" date="2006" name="Genome Res.">
        <title>Skewed genomic variability in strains of the toxigenic bacterial pathogen, Clostridium perfringens.</title>
        <authorList>
            <person name="Myers G.S.A."/>
            <person name="Rasko D.A."/>
            <person name="Cheung J.K."/>
            <person name="Ravel J."/>
            <person name="Seshadri R."/>
            <person name="DeBoy R.T."/>
            <person name="Ren Q."/>
            <person name="Varga J."/>
            <person name="Awad M.M."/>
            <person name="Brinkac L.M."/>
            <person name="Daugherty S.C."/>
            <person name="Haft D.H."/>
            <person name="Dodson R.J."/>
            <person name="Madupu R."/>
            <person name="Nelson W.C."/>
            <person name="Rosovitz M.J."/>
            <person name="Sullivan S.A."/>
            <person name="Khouri H."/>
            <person name="Dimitrov G.I."/>
            <person name="Watkins K.L."/>
            <person name="Mulligan S."/>
            <person name="Benton J."/>
            <person name="Radune D."/>
            <person name="Fisher D.J."/>
            <person name="Atkins H.S."/>
            <person name="Hiscox T."/>
            <person name="Jost B.H."/>
            <person name="Billington S.J."/>
            <person name="Songer J.G."/>
            <person name="McClane B.A."/>
            <person name="Titball R.W."/>
            <person name="Rood J.I."/>
            <person name="Melville S.B."/>
            <person name="Paulsen I.T."/>
        </authorList>
    </citation>
    <scope>NUCLEOTIDE SEQUENCE [LARGE SCALE GENOMIC DNA]</scope>
    <source>
        <strain>ATCC 13124 / DSM 756 / JCM 1290 / NCIMB 6125 / NCTC 8237 / S 107 / Type A</strain>
    </source>
</reference>
<organism>
    <name type="scientific">Clostridium perfringens (strain ATCC 13124 / DSM 756 / JCM 1290 / NCIMB 6125 / NCTC 8237 / Type A)</name>
    <dbReference type="NCBI Taxonomy" id="195103"/>
    <lineage>
        <taxon>Bacteria</taxon>
        <taxon>Bacillati</taxon>
        <taxon>Bacillota</taxon>
        <taxon>Clostridia</taxon>
        <taxon>Eubacteriales</taxon>
        <taxon>Clostridiaceae</taxon>
        <taxon>Clostridium</taxon>
    </lineage>
</organism>
<gene>
    <name evidence="1" type="primary">rplR</name>
    <name type="ordered locus">CPF_2698</name>
</gene>
<evidence type="ECO:0000255" key="1">
    <source>
        <dbReference type="HAMAP-Rule" id="MF_01337"/>
    </source>
</evidence>
<evidence type="ECO:0000305" key="2"/>
<sequence length="119" mass="13299">MFKKADRKEARERRHLRVRKKVFGTPERPRLSVYRSEKNIYAQIIDDVNAVTLVAASSLDKAIEVKGSNKEAAKLVGELVAKRAIEKGINDVVFDRGGYVYHGRVEALASGAREAGLKF</sequence>
<accession>Q0TMR2</accession>
<comment type="function">
    <text evidence="1">This is one of the proteins that bind and probably mediate the attachment of the 5S RNA into the large ribosomal subunit, where it forms part of the central protuberance.</text>
</comment>
<comment type="subunit">
    <text evidence="1">Part of the 50S ribosomal subunit; part of the 5S rRNA/L5/L18/L25 subcomplex. Contacts the 5S and 23S rRNAs.</text>
</comment>
<comment type="similarity">
    <text evidence="1">Belongs to the universal ribosomal protein uL18 family.</text>
</comment>
<name>RL18_CLOP1</name>
<protein>
    <recommendedName>
        <fullName evidence="1">Large ribosomal subunit protein uL18</fullName>
    </recommendedName>
    <alternativeName>
        <fullName evidence="2">50S ribosomal protein L18</fullName>
    </alternativeName>
</protein>
<feature type="chain" id="PRO_1000053017" description="Large ribosomal subunit protein uL18">
    <location>
        <begin position="1"/>
        <end position="119"/>
    </location>
</feature>